<reference key="1">
    <citation type="journal article" date="2004" name="Science">
        <title>Illuminating the evolutionary history of chlamydiae.</title>
        <authorList>
            <person name="Horn M."/>
            <person name="Collingro A."/>
            <person name="Schmitz-Esser S."/>
            <person name="Beier C.L."/>
            <person name="Purkhold U."/>
            <person name="Fartmann B."/>
            <person name="Brandt P."/>
            <person name="Nyakatura G.J."/>
            <person name="Droege M."/>
            <person name="Frishman D."/>
            <person name="Rattei T."/>
            <person name="Mewes H.-W."/>
            <person name="Wagner M."/>
        </authorList>
    </citation>
    <scope>NUCLEOTIDE SEQUENCE [LARGE SCALE GENOMIC DNA]</scope>
    <source>
        <strain>UWE25</strain>
    </source>
</reference>
<evidence type="ECO:0000255" key="1">
    <source>
        <dbReference type="HAMAP-Rule" id="MF_00185"/>
    </source>
</evidence>
<protein>
    <recommendedName>
        <fullName evidence="1">tRNA dimethylallyltransferase</fullName>
        <ecNumber evidence="1">2.5.1.75</ecNumber>
    </recommendedName>
    <alternativeName>
        <fullName evidence="1">Dimethylallyl diphosphate:tRNA dimethylallyltransferase</fullName>
        <shortName evidence="1">DMAPP:tRNA dimethylallyltransferase</shortName>
        <shortName evidence="1">DMATase</shortName>
    </alternativeName>
    <alternativeName>
        <fullName evidence="1">Isopentenyl-diphosphate:tRNA isopentenyltransferase</fullName>
        <shortName evidence="1">IPP transferase</shortName>
        <shortName evidence="1">IPPT</shortName>
        <shortName evidence="1">IPTase</shortName>
    </alternativeName>
</protein>
<organism>
    <name type="scientific">Protochlamydia amoebophila (strain UWE25)</name>
    <dbReference type="NCBI Taxonomy" id="264201"/>
    <lineage>
        <taxon>Bacteria</taxon>
        <taxon>Pseudomonadati</taxon>
        <taxon>Chlamydiota</taxon>
        <taxon>Chlamydiia</taxon>
        <taxon>Parachlamydiales</taxon>
        <taxon>Parachlamydiaceae</taxon>
        <taxon>Candidatus Protochlamydia</taxon>
    </lineage>
</organism>
<name>MIAA_PARUW</name>
<accession>Q6MBT2</accession>
<feature type="chain" id="PRO_0000377269" description="tRNA dimethylallyltransferase">
    <location>
        <begin position="1"/>
        <end position="344"/>
    </location>
</feature>
<feature type="region of interest" description="Interaction with substrate tRNA" evidence="1">
    <location>
        <begin position="68"/>
        <end position="71"/>
    </location>
</feature>
<feature type="binding site" evidence="1">
    <location>
        <begin position="43"/>
        <end position="50"/>
    </location>
    <ligand>
        <name>ATP</name>
        <dbReference type="ChEBI" id="CHEBI:30616"/>
    </ligand>
</feature>
<feature type="binding site" evidence="1">
    <location>
        <begin position="45"/>
        <end position="50"/>
    </location>
    <ligand>
        <name>substrate</name>
    </ligand>
</feature>
<feature type="site" description="Interaction with substrate tRNA" evidence="1">
    <location>
        <position position="134"/>
    </location>
</feature>
<feature type="site" description="Interaction with substrate tRNA" evidence="1">
    <location>
        <position position="156"/>
    </location>
</feature>
<dbReference type="EC" id="2.5.1.75" evidence="1"/>
<dbReference type="EMBL" id="BX908798">
    <property type="protein sequence ID" value="CAF23967.1"/>
    <property type="molecule type" value="Genomic_DNA"/>
</dbReference>
<dbReference type="RefSeq" id="WP_011175793.1">
    <property type="nucleotide sequence ID" value="NC_005861.2"/>
</dbReference>
<dbReference type="SMR" id="Q6MBT2"/>
<dbReference type="STRING" id="264201.pc1243"/>
<dbReference type="KEGG" id="pcu:PC_RS05990"/>
<dbReference type="eggNOG" id="COG0324">
    <property type="taxonomic scope" value="Bacteria"/>
</dbReference>
<dbReference type="HOGENOM" id="CLU_032616_0_1_0"/>
<dbReference type="OrthoDB" id="9776390at2"/>
<dbReference type="Proteomes" id="UP000000529">
    <property type="component" value="Chromosome"/>
</dbReference>
<dbReference type="GO" id="GO:0005524">
    <property type="term" value="F:ATP binding"/>
    <property type="evidence" value="ECO:0007669"/>
    <property type="project" value="UniProtKB-UniRule"/>
</dbReference>
<dbReference type="GO" id="GO:0052381">
    <property type="term" value="F:tRNA dimethylallyltransferase activity"/>
    <property type="evidence" value="ECO:0007669"/>
    <property type="project" value="UniProtKB-UniRule"/>
</dbReference>
<dbReference type="GO" id="GO:0006400">
    <property type="term" value="P:tRNA modification"/>
    <property type="evidence" value="ECO:0007669"/>
    <property type="project" value="TreeGrafter"/>
</dbReference>
<dbReference type="CDD" id="cd02019">
    <property type="entry name" value="NK"/>
    <property type="match status" value="1"/>
</dbReference>
<dbReference type="Gene3D" id="1.10.20.140">
    <property type="match status" value="1"/>
</dbReference>
<dbReference type="Gene3D" id="3.40.50.300">
    <property type="entry name" value="P-loop containing nucleotide triphosphate hydrolases"/>
    <property type="match status" value="1"/>
</dbReference>
<dbReference type="HAMAP" id="MF_00185">
    <property type="entry name" value="IPP_trans"/>
    <property type="match status" value="1"/>
</dbReference>
<dbReference type="InterPro" id="IPR039657">
    <property type="entry name" value="Dimethylallyltransferase"/>
</dbReference>
<dbReference type="InterPro" id="IPR018022">
    <property type="entry name" value="IPT"/>
</dbReference>
<dbReference type="InterPro" id="IPR027417">
    <property type="entry name" value="P-loop_NTPase"/>
</dbReference>
<dbReference type="NCBIfam" id="TIGR00174">
    <property type="entry name" value="miaA"/>
    <property type="match status" value="1"/>
</dbReference>
<dbReference type="PANTHER" id="PTHR11088">
    <property type="entry name" value="TRNA DIMETHYLALLYLTRANSFERASE"/>
    <property type="match status" value="1"/>
</dbReference>
<dbReference type="PANTHER" id="PTHR11088:SF60">
    <property type="entry name" value="TRNA DIMETHYLALLYLTRANSFERASE"/>
    <property type="match status" value="1"/>
</dbReference>
<dbReference type="Pfam" id="PF01715">
    <property type="entry name" value="IPPT"/>
    <property type="match status" value="1"/>
</dbReference>
<dbReference type="SUPFAM" id="SSF52540">
    <property type="entry name" value="P-loop containing nucleoside triphosphate hydrolases"/>
    <property type="match status" value="2"/>
</dbReference>
<sequence>MIGNFSCETDEIKRIVLNFALQVQKKFPSNFQKNKKRIIVIAGPTCCGKSALALNLAQTMDGEIISADSMQVYRGMDIGTAKATKEERLFVPHHLIDIRDIQESFNVVDFYYEARQACQKILDQGNVPIIAGGSGFYLHALLYGPPSGPPSVPEVRKSFEDEIERLGSEILYERLSQLDPQYAKTITKNDKQKIVRALEIMMLTNKKVSKLSWKGRRKPQNYDFRCWFLHRPKEKLYERIDKRCDKMLEEGFMDEVRHLDSLGIRGNSSASQAIGYRQALNFLKTEQTASQYQEFIRSFKQATRHYAKRQFTWFRKEPLFRWLDVDMHDPEVVFDMILKDYELL</sequence>
<keyword id="KW-0067">ATP-binding</keyword>
<keyword id="KW-0460">Magnesium</keyword>
<keyword id="KW-0547">Nucleotide-binding</keyword>
<keyword id="KW-1185">Reference proteome</keyword>
<keyword id="KW-0808">Transferase</keyword>
<keyword id="KW-0819">tRNA processing</keyword>
<proteinExistence type="inferred from homology"/>
<gene>
    <name evidence="1" type="primary">miaA</name>
    <name type="ordered locus">pc1243</name>
</gene>
<comment type="function">
    <text evidence="1">Catalyzes the transfer of a dimethylallyl group onto the adenine at position 37 in tRNAs that read codons beginning with uridine, leading to the formation of N6-(dimethylallyl)adenosine (i(6)A).</text>
</comment>
<comment type="catalytic activity">
    <reaction evidence="1">
        <text>adenosine(37) in tRNA + dimethylallyl diphosphate = N(6)-dimethylallyladenosine(37) in tRNA + diphosphate</text>
        <dbReference type="Rhea" id="RHEA:26482"/>
        <dbReference type="Rhea" id="RHEA-COMP:10162"/>
        <dbReference type="Rhea" id="RHEA-COMP:10375"/>
        <dbReference type="ChEBI" id="CHEBI:33019"/>
        <dbReference type="ChEBI" id="CHEBI:57623"/>
        <dbReference type="ChEBI" id="CHEBI:74411"/>
        <dbReference type="ChEBI" id="CHEBI:74415"/>
        <dbReference type="EC" id="2.5.1.75"/>
    </reaction>
</comment>
<comment type="cofactor">
    <cofactor evidence="1">
        <name>Mg(2+)</name>
        <dbReference type="ChEBI" id="CHEBI:18420"/>
    </cofactor>
</comment>
<comment type="subunit">
    <text evidence="1">Monomer.</text>
</comment>
<comment type="similarity">
    <text evidence="1">Belongs to the IPP transferase family.</text>
</comment>